<protein>
    <recommendedName>
        <fullName evidence="1">3-phenylpropionate/cinnamic acid dioxygenase subunit beta</fullName>
        <ecNumber evidence="1">1.14.12.19</ecNumber>
    </recommendedName>
</protein>
<evidence type="ECO:0000255" key="1">
    <source>
        <dbReference type="HAMAP-Rule" id="MF_01649"/>
    </source>
</evidence>
<keyword id="KW-0058">Aromatic hydrocarbons catabolism</keyword>
<keyword id="KW-0223">Dioxygenase</keyword>
<keyword id="KW-0520">NAD</keyword>
<keyword id="KW-0560">Oxidoreductase</keyword>
<organism>
    <name type="scientific">Escherichia coli O9:H4 (strain HS)</name>
    <dbReference type="NCBI Taxonomy" id="331112"/>
    <lineage>
        <taxon>Bacteria</taxon>
        <taxon>Pseudomonadati</taxon>
        <taxon>Pseudomonadota</taxon>
        <taxon>Gammaproteobacteria</taxon>
        <taxon>Enterobacterales</taxon>
        <taxon>Enterobacteriaceae</taxon>
        <taxon>Escherichia</taxon>
    </lineage>
</organism>
<gene>
    <name evidence="1" type="primary">hcaF</name>
    <name type="ordered locus">EcHS_A2691</name>
</gene>
<feature type="chain" id="PRO_0000333712" description="3-phenylpropionate/cinnamic acid dioxygenase subunit beta">
    <location>
        <begin position="1"/>
        <end position="172"/>
    </location>
</feature>
<reference key="1">
    <citation type="journal article" date="2008" name="J. Bacteriol.">
        <title>The pangenome structure of Escherichia coli: comparative genomic analysis of E. coli commensal and pathogenic isolates.</title>
        <authorList>
            <person name="Rasko D.A."/>
            <person name="Rosovitz M.J."/>
            <person name="Myers G.S.A."/>
            <person name="Mongodin E.F."/>
            <person name="Fricke W.F."/>
            <person name="Gajer P."/>
            <person name="Crabtree J."/>
            <person name="Sebaihia M."/>
            <person name="Thomson N.R."/>
            <person name="Chaudhuri R."/>
            <person name="Henderson I.R."/>
            <person name="Sperandio V."/>
            <person name="Ravel J."/>
        </authorList>
    </citation>
    <scope>NUCLEOTIDE SEQUENCE [LARGE SCALE GENOMIC DNA]</scope>
    <source>
        <strain>HS</strain>
    </source>
</reference>
<accession>A8A345</accession>
<sequence length="172" mass="20565">MSAQVSLELHHRISQFLFHEASLLDDWKFRDWLAQLDEEIRYTMRTTVNAQTRDRRKGVQPPTTWIFNDTKDQLERRIARLETGMAWAEEPPSRTRHLISNCQVSETDIPNVFAVRVNYLLYRAQKERDETFYVGTRFDKVRRLEDDNWRLLERDIVLDQAVITSHNLSVLF</sequence>
<proteinExistence type="inferred from homology"/>
<dbReference type="EC" id="1.14.12.19" evidence="1"/>
<dbReference type="EMBL" id="CP000802">
    <property type="protein sequence ID" value="ABV06949.1"/>
    <property type="molecule type" value="Genomic_DNA"/>
</dbReference>
<dbReference type="RefSeq" id="WP_001276076.1">
    <property type="nucleotide sequence ID" value="NC_009800.1"/>
</dbReference>
<dbReference type="SMR" id="A8A345"/>
<dbReference type="KEGG" id="ecx:EcHS_A2691"/>
<dbReference type="HOGENOM" id="CLU_102527_1_1_6"/>
<dbReference type="UniPathway" id="UPA00714"/>
<dbReference type="GO" id="GO:0008695">
    <property type="term" value="F:3-phenylpropionate dioxygenase activity"/>
    <property type="evidence" value="ECO:0007669"/>
    <property type="project" value="UniProtKB-UniRule"/>
</dbReference>
<dbReference type="GO" id="GO:0019380">
    <property type="term" value="P:3-phenylpropionate catabolic process"/>
    <property type="evidence" value="ECO:0007669"/>
    <property type="project" value="UniProtKB-UniRule"/>
</dbReference>
<dbReference type="CDD" id="cd00667">
    <property type="entry name" value="ring_hydroxylating_dioxygenases_beta"/>
    <property type="match status" value="1"/>
</dbReference>
<dbReference type="FunFam" id="3.10.450.50:FF:000008">
    <property type="entry name" value="3-phenylpropionate/cinnamic acid dioxygenase subunit beta"/>
    <property type="match status" value="1"/>
</dbReference>
<dbReference type="Gene3D" id="3.10.450.50">
    <property type="match status" value="1"/>
</dbReference>
<dbReference type="HAMAP" id="MF_01649">
    <property type="entry name" value="HcaF"/>
    <property type="match status" value="1"/>
</dbReference>
<dbReference type="InterPro" id="IPR054881">
    <property type="entry name" value="3PPDioc_HcaF"/>
</dbReference>
<dbReference type="InterPro" id="IPR023712">
    <property type="entry name" value="HcaF"/>
</dbReference>
<dbReference type="InterPro" id="IPR032710">
    <property type="entry name" value="NTF2-like_dom_sf"/>
</dbReference>
<dbReference type="InterPro" id="IPR000391">
    <property type="entry name" value="Rng_hydr_dOase-bsu"/>
</dbReference>
<dbReference type="NCBIfam" id="NF042947">
    <property type="entry name" value="3PPDioc_HcaF"/>
    <property type="match status" value="1"/>
</dbReference>
<dbReference type="NCBIfam" id="NF007479">
    <property type="entry name" value="PRK10069.1"/>
    <property type="match status" value="1"/>
</dbReference>
<dbReference type="PANTHER" id="PTHR41534:SF2">
    <property type="entry name" value="3-PHENYLPROPIONATE_CINNAMIC ACID DIOXYGENASE SUBUNIT BETA"/>
    <property type="match status" value="1"/>
</dbReference>
<dbReference type="PANTHER" id="PTHR41534">
    <property type="entry name" value="BLR3401 PROTEIN"/>
    <property type="match status" value="1"/>
</dbReference>
<dbReference type="Pfam" id="PF00866">
    <property type="entry name" value="Ring_hydroxyl_B"/>
    <property type="match status" value="1"/>
</dbReference>
<dbReference type="SUPFAM" id="SSF54427">
    <property type="entry name" value="NTF2-like"/>
    <property type="match status" value="1"/>
</dbReference>
<name>HCAF_ECOHS</name>
<comment type="function">
    <text evidence="1">Part of the multicomponent 3-phenylpropionate dioxygenase. Converts 3-phenylpropionic acid (PP) and cinnamic acid (CI) into 3-phenylpropionate-dihydrodiol (PP-dihydrodiol) and cinnamic acid-dihydrodiol (CI-dihydrodiol), respectively.</text>
</comment>
<comment type="catalytic activity">
    <reaction evidence="1">
        <text>3-phenylpropanoate + NADH + O2 + H(+) = 3-(cis-5,6-dihydroxycyclohexa-1,3-dien-1-yl)propanoate + NAD(+)</text>
        <dbReference type="Rhea" id="RHEA:20357"/>
        <dbReference type="ChEBI" id="CHEBI:15378"/>
        <dbReference type="ChEBI" id="CHEBI:15379"/>
        <dbReference type="ChEBI" id="CHEBI:51057"/>
        <dbReference type="ChEBI" id="CHEBI:57540"/>
        <dbReference type="ChEBI" id="CHEBI:57945"/>
        <dbReference type="ChEBI" id="CHEBI:60087"/>
        <dbReference type="EC" id="1.14.12.19"/>
    </reaction>
</comment>
<comment type="catalytic activity">
    <reaction evidence="1">
        <text>(E)-cinnamate + NADH + O2 + H(+) = (2E)-3-(cis-5,6-dihydroxycyclohexa-1,3-dien-1-yl)prop-2-enoate + NAD(+)</text>
        <dbReference type="Rhea" id="RHEA:25058"/>
        <dbReference type="ChEBI" id="CHEBI:15378"/>
        <dbReference type="ChEBI" id="CHEBI:15379"/>
        <dbReference type="ChEBI" id="CHEBI:15669"/>
        <dbReference type="ChEBI" id="CHEBI:57540"/>
        <dbReference type="ChEBI" id="CHEBI:57945"/>
        <dbReference type="ChEBI" id="CHEBI:61451"/>
        <dbReference type="EC" id="1.14.12.19"/>
    </reaction>
</comment>
<comment type="pathway">
    <text evidence="1">Aromatic compound metabolism; 3-phenylpropanoate degradation.</text>
</comment>
<comment type="subunit">
    <text evidence="1">This dioxygenase system consists of four proteins: the two subunits of the hydroxylase component (HcaE and HcaF), a ferredoxin (HcaC) and a ferredoxin reductase (HcaD).</text>
</comment>
<comment type="similarity">
    <text evidence="1">Belongs to the bacterial ring-hydroxylating dioxygenase beta subunit family.</text>
</comment>